<organism>
    <name type="scientific">Escherichia coli (strain 55989 / EAEC)</name>
    <dbReference type="NCBI Taxonomy" id="585055"/>
    <lineage>
        <taxon>Bacteria</taxon>
        <taxon>Pseudomonadati</taxon>
        <taxon>Pseudomonadota</taxon>
        <taxon>Gammaproteobacteria</taxon>
        <taxon>Enterobacterales</taxon>
        <taxon>Enterobacteriaceae</taxon>
        <taxon>Escherichia</taxon>
    </lineage>
</organism>
<accession>B7LDJ5</accession>
<dbReference type="EMBL" id="CU928145">
    <property type="protein sequence ID" value="CAU98762.1"/>
    <property type="molecule type" value="Genomic_DNA"/>
</dbReference>
<dbReference type="RefSeq" id="WP_000065253.1">
    <property type="nucleotide sequence ID" value="NZ_CP028304.1"/>
</dbReference>
<dbReference type="SMR" id="B7LDJ5"/>
<dbReference type="GeneID" id="93774456"/>
<dbReference type="KEGG" id="eck:EC55989_2895"/>
<dbReference type="HOGENOM" id="CLU_103507_2_1_6"/>
<dbReference type="Proteomes" id="UP000000746">
    <property type="component" value="Chromosome"/>
</dbReference>
<dbReference type="GO" id="GO:0022625">
    <property type="term" value="C:cytosolic large ribosomal subunit"/>
    <property type="evidence" value="ECO:0007669"/>
    <property type="project" value="TreeGrafter"/>
</dbReference>
<dbReference type="GO" id="GO:0003735">
    <property type="term" value="F:structural constituent of ribosome"/>
    <property type="evidence" value="ECO:0007669"/>
    <property type="project" value="InterPro"/>
</dbReference>
<dbReference type="GO" id="GO:0006412">
    <property type="term" value="P:translation"/>
    <property type="evidence" value="ECO:0007669"/>
    <property type="project" value="UniProtKB-UniRule"/>
</dbReference>
<dbReference type="FunFam" id="2.30.30.790:FF:000001">
    <property type="entry name" value="50S ribosomal protein L19"/>
    <property type="match status" value="1"/>
</dbReference>
<dbReference type="Gene3D" id="2.30.30.790">
    <property type="match status" value="1"/>
</dbReference>
<dbReference type="HAMAP" id="MF_00402">
    <property type="entry name" value="Ribosomal_bL19"/>
    <property type="match status" value="1"/>
</dbReference>
<dbReference type="InterPro" id="IPR001857">
    <property type="entry name" value="Ribosomal_bL19"/>
</dbReference>
<dbReference type="InterPro" id="IPR018257">
    <property type="entry name" value="Ribosomal_bL19_CS"/>
</dbReference>
<dbReference type="InterPro" id="IPR038657">
    <property type="entry name" value="Ribosomal_bL19_sf"/>
</dbReference>
<dbReference type="InterPro" id="IPR008991">
    <property type="entry name" value="Translation_prot_SH3-like_sf"/>
</dbReference>
<dbReference type="NCBIfam" id="TIGR01024">
    <property type="entry name" value="rplS_bact"/>
    <property type="match status" value="1"/>
</dbReference>
<dbReference type="PANTHER" id="PTHR15680:SF9">
    <property type="entry name" value="LARGE RIBOSOMAL SUBUNIT PROTEIN BL19M"/>
    <property type="match status" value="1"/>
</dbReference>
<dbReference type="PANTHER" id="PTHR15680">
    <property type="entry name" value="RIBOSOMAL PROTEIN L19"/>
    <property type="match status" value="1"/>
</dbReference>
<dbReference type="Pfam" id="PF01245">
    <property type="entry name" value="Ribosomal_L19"/>
    <property type="match status" value="1"/>
</dbReference>
<dbReference type="PIRSF" id="PIRSF002191">
    <property type="entry name" value="Ribosomal_L19"/>
    <property type="match status" value="1"/>
</dbReference>
<dbReference type="PRINTS" id="PR00061">
    <property type="entry name" value="RIBOSOMALL19"/>
</dbReference>
<dbReference type="SUPFAM" id="SSF50104">
    <property type="entry name" value="Translation proteins SH3-like domain"/>
    <property type="match status" value="1"/>
</dbReference>
<dbReference type="PROSITE" id="PS01015">
    <property type="entry name" value="RIBOSOMAL_L19"/>
    <property type="match status" value="1"/>
</dbReference>
<feature type="chain" id="PRO_1000193829" description="Large ribosomal subunit protein bL19">
    <location>
        <begin position="1"/>
        <end position="115"/>
    </location>
</feature>
<name>RL19_ECO55</name>
<evidence type="ECO:0000255" key="1">
    <source>
        <dbReference type="HAMAP-Rule" id="MF_00402"/>
    </source>
</evidence>
<evidence type="ECO:0000305" key="2"/>
<sequence length="115" mass="13133">MSNIIKQLEQEQMKQDVPSFRPGDTVEVKVWVVEGSKKRLQAFEGVVIAIRNRGLHSAFTVRKISNGEGVERVFQTHSPVVDSISVKRRGAVRKAKLYYLRERTGKAARIKERLN</sequence>
<keyword id="KW-1185">Reference proteome</keyword>
<keyword id="KW-0687">Ribonucleoprotein</keyword>
<keyword id="KW-0689">Ribosomal protein</keyword>
<comment type="function">
    <text evidence="1">This protein is located at the 30S-50S ribosomal subunit interface and may play a role in the structure and function of the aminoacyl-tRNA binding site.</text>
</comment>
<comment type="similarity">
    <text evidence="1">Belongs to the bacterial ribosomal protein bL19 family.</text>
</comment>
<reference key="1">
    <citation type="journal article" date="2009" name="PLoS Genet.">
        <title>Organised genome dynamics in the Escherichia coli species results in highly diverse adaptive paths.</title>
        <authorList>
            <person name="Touchon M."/>
            <person name="Hoede C."/>
            <person name="Tenaillon O."/>
            <person name="Barbe V."/>
            <person name="Baeriswyl S."/>
            <person name="Bidet P."/>
            <person name="Bingen E."/>
            <person name="Bonacorsi S."/>
            <person name="Bouchier C."/>
            <person name="Bouvet O."/>
            <person name="Calteau A."/>
            <person name="Chiapello H."/>
            <person name="Clermont O."/>
            <person name="Cruveiller S."/>
            <person name="Danchin A."/>
            <person name="Diard M."/>
            <person name="Dossat C."/>
            <person name="Karoui M.E."/>
            <person name="Frapy E."/>
            <person name="Garry L."/>
            <person name="Ghigo J.M."/>
            <person name="Gilles A.M."/>
            <person name="Johnson J."/>
            <person name="Le Bouguenec C."/>
            <person name="Lescat M."/>
            <person name="Mangenot S."/>
            <person name="Martinez-Jehanne V."/>
            <person name="Matic I."/>
            <person name="Nassif X."/>
            <person name="Oztas S."/>
            <person name="Petit M.A."/>
            <person name="Pichon C."/>
            <person name="Rouy Z."/>
            <person name="Ruf C.S."/>
            <person name="Schneider D."/>
            <person name="Tourret J."/>
            <person name="Vacherie B."/>
            <person name="Vallenet D."/>
            <person name="Medigue C."/>
            <person name="Rocha E.P.C."/>
            <person name="Denamur E."/>
        </authorList>
    </citation>
    <scope>NUCLEOTIDE SEQUENCE [LARGE SCALE GENOMIC DNA]</scope>
    <source>
        <strain>55989 / EAEC</strain>
    </source>
</reference>
<protein>
    <recommendedName>
        <fullName evidence="1">Large ribosomal subunit protein bL19</fullName>
    </recommendedName>
    <alternativeName>
        <fullName evidence="2">50S ribosomal protein L19</fullName>
    </alternativeName>
</protein>
<proteinExistence type="inferred from homology"/>
<gene>
    <name evidence="1" type="primary">rplS</name>
    <name type="ordered locus">EC55989_2895</name>
</gene>